<dbReference type="EC" id="2.7.7.87" evidence="1"/>
<dbReference type="EMBL" id="CP000653">
    <property type="protein sequence ID" value="ABP62371.1"/>
    <property type="status" value="ALT_INIT"/>
    <property type="molecule type" value="Genomic_DNA"/>
</dbReference>
<dbReference type="RefSeq" id="WP_041689543.1">
    <property type="nucleotide sequence ID" value="NC_009436.1"/>
</dbReference>
<dbReference type="SMR" id="A4WF91"/>
<dbReference type="STRING" id="399742.Ent638_3714"/>
<dbReference type="KEGG" id="ent:Ent638_3714"/>
<dbReference type="eggNOG" id="COG0009">
    <property type="taxonomic scope" value="Bacteria"/>
</dbReference>
<dbReference type="HOGENOM" id="CLU_031397_6_0_6"/>
<dbReference type="OrthoDB" id="9814580at2"/>
<dbReference type="Proteomes" id="UP000000230">
    <property type="component" value="Chromosome"/>
</dbReference>
<dbReference type="GO" id="GO:0005737">
    <property type="term" value="C:cytoplasm"/>
    <property type="evidence" value="ECO:0007669"/>
    <property type="project" value="UniProtKB-SubCell"/>
</dbReference>
<dbReference type="GO" id="GO:0005524">
    <property type="term" value="F:ATP binding"/>
    <property type="evidence" value="ECO:0007669"/>
    <property type="project" value="UniProtKB-UniRule"/>
</dbReference>
<dbReference type="GO" id="GO:0003725">
    <property type="term" value="F:double-stranded RNA binding"/>
    <property type="evidence" value="ECO:0007669"/>
    <property type="project" value="InterPro"/>
</dbReference>
<dbReference type="GO" id="GO:0061710">
    <property type="term" value="F:L-threonylcarbamoyladenylate synthase"/>
    <property type="evidence" value="ECO:0007669"/>
    <property type="project" value="UniProtKB-EC"/>
</dbReference>
<dbReference type="GO" id="GO:0000049">
    <property type="term" value="F:tRNA binding"/>
    <property type="evidence" value="ECO:0007669"/>
    <property type="project" value="TreeGrafter"/>
</dbReference>
<dbReference type="GO" id="GO:0006450">
    <property type="term" value="P:regulation of translational fidelity"/>
    <property type="evidence" value="ECO:0007669"/>
    <property type="project" value="TreeGrafter"/>
</dbReference>
<dbReference type="GO" id="GO:0002949">
    <property type="term" value="P:tRNA threonylcarbamoyladenosine modification"/>
    <property type="evidence" value="ECO:0007669"/>
    <property type="project" value="UniProtKB-UniRule"/>
</dbReference>
<dbReference type="FunFam" id="3.90.870.10:FF:000004">
    <property type="entry name" value="Threonylcarbamoyl-AMP synthase"/>
    <property type="match status" value="1"/>
</dbReference>
<dbReference type="Gene3D" id="3.90.870.10">
    <property type="entry name" value="DHBP synthase"/>
    <property type="match status" value="1"/>
</dbReference>
<dbReference type="HAMAP" id="MF_01852">
    <property type="entry name" value="TsaC"/>
    <property type="match status" value="1"/>
</dbReference>
<dbReference type="InterPro" id="IPR017945">
    <property type="entry name" value="DHBP_synth_RibB-like_a/b_dom"/>
</dbReference>
<dbReference type="InterPro" id="IPR006070">
    <property type="entry name" value="Sua5-like_dom"/>
</dbReference>
<dbReference type="InterPro" id="IPR023535">
    <property type="entry name" value="TC-AMP_synthase"/>
</dbReference>
<dbReference type="InterPro" id="IPR050156">
    <property type="entry name" value="TC-AMP_synthase_SUA5"/>
</dbReference>
<dbReference type="NCBIfam" id="NF007919">
    <property type="entry name" value="PRK10634.1"/>
    <property type="match status" value="1"/>
</dbReference>
<dbReference type="PANTHER" id="PTHR17490">
    <property type="entry name" value="SUA5"/>
    <property type="match status" value="1"/>
</dbReference>
<dbReference type="PANTHER" id="PTHR17490:SF18">
    <property type="entry name" value="THREONYLCARBAMOYL-AMP SYNTHASE"/>
    <property type="match status" value="1"/>
</dbReference>
<dbReference type="Pfam" id="PF01300">
    <property type="entry name" value="Sua5_yciO_yrdC"/>
    <property type="match status" value="1"/>
</dbReference>
<dbReference type="SUPFAM" id="SSF55821">
    <property type="entry name" value="YrdC/RibB"/>
    <property type="match status" value="1"/>
</dbReference>
<dbReference type="PROSITE" id="PS51163">
    <property type="entry name" value="YRDC"/>
    <property type="match status" value="1"/>
</dbReference>
<gene>
    <name evidence="1" type="primary">tsaC</name>
    <name type="synonym">rimN</name>
    <name type="ordered locus">Ent638_3714</name>
</gene>
<sequence>MNNNYPLGSIAQAVDVLKNEEVIAYPTEAVFGVGCDPDSETAVTRLLELKQRPVEKGLILIAANFEQLKPYIDDSMLTEQQRNTIFSAWPGPVTFVFPALPSTPSWLTGRFDSLAVRVTDHPLVVELCETFGKPLVSTSANLTGLPPCRTSQEVLAQFGDGFPVVVGETGGRLNPSEIRDALTGERFRQG</sequence>
<accession>A4WF91</accession>
<evidence type="ECO:0000255" key="1">
    <source>
        <dbReference type="HAMAP-Rule" id="MF_01852"/>
    </source>
</evidence>
<evidence type="ECO:0000305" key="2"/>
<proteinExistence type="inferred from homology"/>
<name>TSAC_ENT38</name>
<reference key="1">
    <citation type="journal article" date="2010" name="PLoS Genet.">
        <title>Genome sequence of the plant growth promoting endophytic bacterium Enterobacter sp. 638.</title>
        <authorList>
            <person name="Taghavi S."/>
            <person name="van der Lelie D."/>
            <person name="Hoffman A."/>
            <person name="Zhang Y.B."/>
            <person name="Walla M.D."/>
            <person name="Vangronsveld J."/>
            <person name="Newman L."/>
            <person name="Monchy S."/>
        </authorList>
    </citation>
    <scope>NUCLEOTIDE SEQUENCE [LARGE SCALE GENOMIC DNA]</scope>
    <source>
        <strain>638</strain>
    </source>
</reference>
<comment type="function">
    <text evidence="1">Required for the formation of a threonylcarbamoyl group on adenosine at position 37 (t(6)A37) in tRNAs that read codons beginning with adenine. Catalyzes the conversion of L-threonine, HCO(3)(-)/CO(2) and ATP to give threonylcarbamoyl-AMP (TC-AMP) as the acyladenylate intermediate, with the release of diphosphate.</text>
</comment>
<comment type="catalytic activity">
    <reaction evidence="1">
        <text>L-threonine + hydrogencarbonate + ATP = L-threonylcarbamoyladenylate + diphosphate + H2O</text>
        <dbReference type="Rhea" id="RHEA:36407"/>
        <dbReference type="ChEBI" id="CHEBI:15377"/>
        <dbReference type="ChEBI" id="CHEBI:17544"/>
        <dbReference type="ChEBI" id="CHEBI:30616"/>
        <dbReference type="ChEBI" id="CHEBI:33019"/>
        <dbReference type="ChEBI" id="CHEBI:57926"/>
        <dbReference type="ChEBI" id="CHEBI:73682"/>
        <dbReference type="EC" id="2.7.7.87"/>
    </reaction>
</comment>
<comment type="subcellular location">
    <subcellularLocation>
        <location evidence="1">Cytoplasm</location>
    </subcellularLocation>
</comment>
<comment type="similarity">
    <text evidence="1">Belongs to the SUA5 family. TsaC subfamily.</text>
</comment>
<comment type="sequence caution" evidence="2">
    <conflict type="erroneous initiation">
        <sequence resource="EMBL-CDS" id="ABP62371"/>
    </conflict>
</comment>
<keyword id="KW-0067">ATP-binding</keyword>
<keyword id="KW-0963">Cytoplasm</keyword>
<keyword id="KW-0547">Nucleotide-binding</keyword>
<keyword id="KW-0548">Nucleotidyltransferase</keyword>
<keyword id="KW-0808">Transferase</keyword>
<keyword id="KW-0819">tRNA processing</keyword>
<protein>
    <recommendedName>
        <fullName evidence="1">Threonylcarbamoyl-AMP synthase</fullName>
        <shortName evidence="1">TC-AMP synthase</shortName>
        <ecNumber evidence="1">2.7.7.87</ecNumber>
    </recommendedName>
    <alternativeName>
        <fullName evidence="1">L-threonylcarbamoyladenylate synthase</fullName>
    </alternativeName>
    <alternativeName>
        <fullName evidence="1">t(6)A37 threonylcarbamoyladenosine biosynthesis protein TsaC</fullName>
    </alternativeName>
    <alternativeName>
        <fullName evidence="1">tRNA threonylcarbamoyladenosine biosynthesis protein TsaC</fullName>
    </alternativeName>
</protein>
<feature type="chain" id="PRO_0000352911" description="Threonylcarbamoyl-AMP synthase">
    <location>
        <begin position="1"/>
        <end position="190"/>
    </location>
</feature>
<feature type="domain" description="YrdC-like" evidence="1">
    <location>
        <begin position="7"/>
        <end position="190"/>
    </location>
</feature>
<organism>
    <name type="scientific">Enterobacter sp. (strain 638)</name>
    <dbReference type="NCBI Taxonomy" id="399742"/>
    <lineage>
        <taxon>Bacteria</taxon>
        <taxon>Pseudomonadati</taxon>
        <taxon>Pseudomonadota</taxon>
        <taxon>Gammaproteobacteria</taxon>
        <taxon>Enterobacterales</taxon>
        <taxon>Enterobacteriaceae</taxon>
        <taxon>Enterobacter</taxon>
    </lineage>
</organism>